<evidence type="ECO:0000250" key="1"/>
<evidence type="ECO:0000250" key="2">
    <source>
        <dbReference type="UniProtKB" id="Q76IC6"/>
    </source>
</evidence>
<evidence type="ECO:0000250" key="3">
    <source>
        <dbReference type="UniProtKB" id="Q8IUH5"/>
    </source>
</evidence>
<evidence type="ECO:0000250" key="4">
    <source>
        <dbReference type="UniProtKB" id="Q8IYP9"/>
    </source>
</evidence>
<evidence type="ECO:0000255" key="5"/>
<evidence type="ECO:0000255" key="6">
    <source>
        <dbReference type="PROSITE-ProRule" id="PRU00067"/>
    </source>
</evidence>
<evidence type="ECO:0000269" key="7">
    <source>
    </source>
</evidence>
<evidence type="ECO:0000305" key="8"/>
<evidence type="ECO:0000312" key="9">
    <source>
        <dbReference type="EMBL" id="AAU89703.1"/>
    </source>
</evidence>
<evidence type="ECO:0000312" key="10">
    <source>
        <dbReference type="MGI" id="MGI:2685625"/>
    </source>
</evidence>
<feature type="chain" id="PRO_0000212913" description="Palmitoyltransferase ZDHHC23">
    <location>
        <begin position="1"/>
        <end position="425"/>
    </location>
</feature>
<feature type="topological domain" description="Cytoplasmic" evidence="8">
    <location>
        <begin position="1"/>
        <end position="81"/>
    </location>
</feature>
<feature type="transmembrane region" description="Helical" evidence="5">
    <location>
        <begin position="82"/>
        <end position="99"/>
    </location>
</feature>
<feature type="topological domain" description="Lumenal" evidence="8">
    <location>
        <begin position="100"/>
        <end position="102"/>
    </location>
</feature>
<feature type="transmembrane region" description="Helical" evidence="5">
    <location>
        <begin position="103"/>
        <end position="125"/>
    </location>
</feature>
<feature type="topological domain" description="Cytoplasmic" evidence="8">
    <location>
        <begin position="126"/>
        <end position="130"/>
    </location>
</feature>
<feature type="transmembrane region" description="Helical" evidence="5">
    <location>
        <begin position="131"/>
        <end position="151"/>
    </location>
</feature>
<feature type="topological domain" description="Lumenal" evidence="8">
    <location>
        <begin position="152"/>
        <end position="159"/>
    </location>
</feature>
<feature type="transmembrane region" description="Helical" evidence="5">
    <location>
        <begin position="160"/>
        <end position="180"/>
    </location>
</feature>
<feature type="topological domain" description="Cytoplasmic" evidence="8">
    <location>
        <begin position="181"/>
        <end position="292"/>
    </location>
</feature>
<feature type="transmembrane region" description="Helical" evidence="5">
    <location>
        <begin position="293"/>
        <end position="313"/>
    </location>
</feature>
<feature type="topological domain" description="Lumenal" evidence="8">
    <location>
        <begin position="314"/>
        <end position="343"/>
    </location>
</feature>
<feature type="transmembrane region" description="Helical" evidence="5">
    <location>
        <begin position="344"/>
        <end position="364"/>
    </location>
</feature>
<feature type="topological domain" description="Cytoplasmic" evidence="8">
    <location>
        <begin position="365"/>
        <end position="425"/>
    </location>
</feature>
<feature type="domain" description="DHHC" evidence="6">
    <location>
        <begin position="249"/>
        <end position="299"/>
    </location>
</feature>
<feature type="region of interest" description="Interaction with NOS1" evidence="1">
    <location>
        <begin position="422"/>
        <end position="425"/>
    </location>
</feature>
<feature type="active site" description="S-palmitoyl cysteine intermediate" evidence="6">
    <location>
        <position position="279"/>
    </location>
</feature>
<feature type="sequence conflict" description="In Ref. 2; BAE23368." evidence="8" ref="2">
    <original>Q</original>
    <variation>E</variation>
    <location>
        <position position="131"/>
    </location>
</feature>
<comment type="function">
    <text evidence="4">Palmitoyltransferase that could catalyze the addition of palmitate onto various protein substrates and be involved in a variety of cellular processes. Palmitoyltransferase that mediates palmitoylation of KCNMA1, regulating localization of KCNMA1 to the plasma membrane. May be involved in NOS1 regulation and targeting to the synaptic membrane.</text>
</comment>
<comment type="catalytic activity">
    <reaction evidence="4">
        <text>L-cysteinyl-[protein] + hexadecanoyl-CoA = S-hexadecanoyl-L-cysteinyl-[protein] + CoA</text>
        <dbReference type="Rhea" id="RHEA:36683"/>
        <dbReference type="Rhea" id="RHEA-COMP:10131"/>
        <dbReference type="Rhea" id="RHEA-COMP:11032"/>
        <dbReference type="ChEBI" id="CHEBI:29950"/>
        <dbReference type="ChEBI" id="CHEBI:57287"/>
        <dbReference type="ChEBI" id="CHEBI:57379"/>
        <dbReference type="ChEBI" id="CHEBI:74151"/>
        <dbReference type="EC" id="2.3.1.225"/>
    </reaction>
    <physiologicalReaction direction="left-to-right" evidence="4">
        <dbReference type="Rhea" id="RHEA:36684"/>
    </physiologicalReaction>
</comment>
<comment type="subunit">
    <text evidence="2">Interacts with NOS1.</text>
</comment>
<comment type="subcellular location">
    <subcellularLocation>
        <location evidence="4">Golgi apparatus membrane</location>
        <topology evidence="5">Multi-pass membrane protein</topology>
    </subcellularLocation>
    <subcellularLocation>
        <location evidence="4">Golgi apparatus</location>
        <location evidence="4">trans-Golgi network membrane</location>
        <topology evidence="5">Multi-pass membrane protein</topology>
    </subcellularLocation>
    <text evidence="2">Neuronal soma and dendrites.</text>
</comment>
<comment type="tissue specificity">
    <text evidence="7">Expressed in the brain.</text>
</comment>
<comment type="domain">
    <text evidence="3">The DHHC domain is required for palmitoyltransferase activity.</text>
</comment>
<comment type="similarity">
    <text evidence="8">Belongs to the DHHC palmitoyltransferase family.</text>
</comment>
<comment type="sequence caution" evidence="8">
    <conflict type="erroneous initiation">
        <sequence resource="EMBL-CDS" id="BAE27992"/>
    </conflict>
</comment>
<name>ZDH23_MOUSE</name>
<dbReference type="EC" id="2.3.1.225" evidence="4"/>
<dbReference type="EMBL" id="AY668949">
    <property type="protein sequence ID" value="AAU89703.1"/>
    <property type="molecule type" value="mRNA"/>
</dbReference>
<dbReference type="EMBL" id="AK137472">
    <property type="protein sequence ID" value="BAE23368.1"/>
    <property type="molecule type" value="mRNA"/>
</dbReference>
<dbReference type="EMBL" id="AK147553">
    <property type="protein sequence ID" value="BAE27992.1"/>
    <property type="status" value="ALT_INIT"/>
    <property type="molecule type" value="mRNA"/>
</dbReference>
<dbReference type="EMBL" id="BC139052">
    <property type="protein sequence ID" value="AAI39053.1"/>
    <property type="molecule type" value="mRNA"/>
</dbReference>
<dbReference type="EMBL" id="BC145684">
    <property type="protein sequence ID" value="AAI45685.1"/>
    <property type="molecule type" value="mRNA"/>
</dbReference>
<dbReference type="CCDS" id="CCDS28180.1"/>
<dbReference type="RefSeq" id="NP_001007461.1">
    <property type="nucleotide sequence ID" value="NM_001007460.2"/>
</dbReference>
<dbReference type="RefSeq" id="NP_001355632.1">
    <property type="nucleotide sequence ID" value="NM_001368703.1"/>
</dbReference>
<dbReference type="RefSeq" id="XP_006522373.1">
    <property type="nucleotide sequence ID" value="XM_006522310.3"/>
</dbReference>
<dbReference type="RefSeq" id="XP_006522374.1">
    <property type="nucleotide sequence ID" value="XM_006522311.3"/>
</dbReference>
<dbReference type="RefSeq" id="XP_017172544.1">
    <property type="nucleotide sequence ID" value="XM_017317055.2"/>
</dbReference>
<dbReference type="RefSeq" id="XP_017172545.1">
    <property type="nucleotide sequence ID" value="XM_017317056.1"/>
</dbReference>
<dbReference type="RefSeq" id="XP_036015889.1">
    <property type="nucleotide sequence ID" value="XM_036159996.1"/>
</dbReference>
<dbReference type="BioGRID" id="237125">
    <property type="interactions" value="1"/>
</dbReference>
<dbReference type="FunCoup" id="Q5Y5T3">
    <property type="interactions" value="1107"/>
</dbReference>
<dbReference type="STRING" id="10090.ENSMUSP00000156253"/>
<dbReference type="iPTMnet" id="Q5Y5T3"/>
<dbReference type="PhosphoSitePlus" id="Q5Y5T3"/>
<dbReference type="SwissPalm" id="Q5Y5T3"/>
<dbReference type="PaxDb" id="10090-ENSMUSP00000128650"/>
<dbReference type="ProteomicsDB" id="274974"/>
<dbReference type="Antibodypedia" id="16460">
    <property type="antibodies" value="52 antibodies from 14 providers"/>
</dbReference>
<dbReference type="DNASU" id="332175"/>
<dbReference type="Ensembl" id="ENSMUST00000165648.2">
    <property type="protein sequence ID" value="ENSMUSP00000128650.2"/>
    <property type="gene ID" value="ENSMUSG00000036304.15"/>
</dbReference>
<dbReference type="Ensembl" id="ENSMUST00000231700.2">
    <property type="protein sequence ID" value="ENSMUSP00000156253.2"/>
    <property type="gene ID" value="ENSMUSG00000036304.15"/>
</dbReference>
<dbReference type="GeneID" id="332175"/>
<dbReference type="KEGG" id="mmu:332175"/>
<dbReference type="UCSC" id="uc007zgp.1">
    <property type="organism name" value="mouse"/>
</dbReference>
<dbReference type="AGR" id="MGI:2685625"/>
<dbReference type="CTD" id="254887"/>
<dbReference type="MGI" id="MGI:2685625">
    <property type="gene designation" value="Zdhhc23"/>
</dbReference>
<dbReference type="VEuPathDB" id="HostDB:ENSMUSG00000036304"/>
<dbReference type="eggNOG" id="KOG1311">
    <property type="taxonomic scope" value="Eukaryota"/>
</dbReference>
<dbReference type="GeneTree" id="ENSGT00940000156558"/>
<dbReference type="HOGENOM" id="CLU_055455_0_0_1"/>
<dbReference type="InParanoid" id="Q5Y5T3"/>
<dbReference type="OMA" id="GNWSEFM"/>
<dbReference type="OrthoDB" id="430659at2759"/>
<dbReference type="PhylomeDB" id="Q5Y5T3"/>
<dbReference type="TreeFam" id="TF354316"/>
<dbReference type="BioGRID-ORCS" id="332175">
    <property type="hits" value="0 hits in 77 CRISPR screens"/>
</dbReference>
<dbReference type="PRO" id="PR:Q5Y5T3"/>
<dbReference type="Proteomes" id="UP000000589">
    <property type="component" value="Chromosome 16"/>
</dbReference>
<dbReference type="RNAct" id="Q5Y5T3">
    <property type="molecule type" value="protein"/>
</dbReference>
<dbReference type="Bgee" id="ENSMUSG00000036304">
    <property type="expression patterns" value="Expressed in lumbar dorsal root ganglion and 126 other cell types or tissues"/>
</dbReference>
<dbReference type="ExpressionAtlas" id="Q5Y5T3">
    <property type="expression patterns" value="baseline and differential"/>
</dbReference>
<dbReference type="GO" id="GO:0000139">
    <property type="term" value="C:Golgi membrane"/>
    <property type="evidence" value="ECO:0007669"/>
    <property type="project" value="UniProtKB-SubCell"/>
</dbReference>
<dbReference type="GO" id="GO:0019706">
    <property type="term" value="F:protein-cysteine S-palmitoyltransferase activity"/>
    <property type="evidence" value="ECO:0007669"/>
    <property type="project" value="UniProtKB-EC"/>
</dbReference>
<dbReference type="GO" id="GO:0072659">
    <property type="term" value="P:protein localization to plasma membrane"/>
    <property type="evidence" value="ECO:0000315"/>
    <property type="project" value="MGI"/>
</dbReference>
<dbReference type="InterPro" id="IPR001594">
    <property type="entry name" value="Palmitoyltrfase_DHHC"/>
</dbReference>
<dbReference type="InterPro" id="IPR039859">
    <property type="entry name" value="PFA4/ZDH16/20/ERF2-like"/>
</dbReference>
<dbReference type="PANTHER" id="PTHR22883:SF475">
    <property type="entry name" value="PALMITOYLTRANSFERASE ZDHHC23"/>
    <property type="match status" value="1"/>
</dbReference>
<dbReference type="PANTHER" id="PTHR22883">
    <property type="entry name" value="ZINC FINGER DHHC DOMAIN CONTAINING PROTEIN"/>
    <property type="match status" value="1"/>
</dbReference>
<dbReference type="Pfam" id="PF01529">
    <property type="entry name" value="DHHC"/>
    <property type="match status" value="1"/>
</dbReference>
<dbReference type="PROSITE" id="PS50216">
    <property type="entry name" value="DHHC"/>
    <property type="match status" value="1"/>
</dbReference>
<accession>Q5Y5T3</accession>
<accession>A6H5Y4</accession>
<accession>Q3UH65</accession>
<accession>Q3UVA2</accession>
<gene>
    <name evidence="10" type="primary">Zdhhc23</name>
    <name type="synonym">Gm779</name>
</gene>
<protein>
    <recommendedName>
        <fullName evidence="8">Palmitoyltransferase ZDHHC23</fullName>
        <ecNumber evidence="4">2.3.1.225</ecNumber>
    </recommendedName>
    <alternativeName>
        <fullName evidence="9">DHHC-containing protein 11</fullName>
    </alternativeName>
    <alternativeName>
        <fullName evidence="10">Zinc finger DHHC domain-containing protein 23</fullName>
        <shortName>DHHC-23</shortName>
        <shortName>zDHHC23</shortName>
    </alternativeName>
</protein>
<organism>
    <name type="scientific">Mus musculus</name>
    <name type="common">Mouse</name>
    <dbReference type="NCBI Taxonomy" id="10090"/>
    <lineage>
        <taxon>Eukaryota</taxon>
        <taxon>Metazoa</taxon>
        <taxon>Chordata</taxon>
        <taxon>Craniata</taxon>
        <taxon>Vertebrata</taxon>
        <taxon>Euteleostomi</taxon>
        <taxon>Mammalia</taxon>
        <taxon>Eutheria</taxon>
        <taxon>Euarchontoglires</taxon>
        <taxon>Glires</taxon>
        <taxon>Rodentia</taxon>
        <taxon>Myomorpha</taxon>
        <taxon>Muroidea</taxon>
        <taxon>Muridae</taxon>
        <taxon>Murinae</taxon>
        <taxon>Mus</taxon>
        <taxon>Mus</taxon>
    </lineage>
</organism>
<proteinExistence type="evidence at transcript level"/>
<keyword id="KW-0012">Acyltransferase</keyword>
<keyword id="KW-0333">Golgi apparatus</keyword>
<keyword id="KW-0449">Lipoprotein</keyword>
<keyword id="KW-0472">Membrane</keyword>
<keyword id="KW-0564">Palmitate</keyword>
<keyword id="KW-1185">Reference proteome</keyword>
<keyword id="KW-0808">Transferase</keyword>
<keyword id="KW-0812">Transmembrane</keyword>
<keyword id="KW-1133">Transmembrane helix</keyword>
<reference key="1">
    <citation type="journal article" date="2004" name="Neuron">
        <title>Identification of PSD-95 palmitoylating enzymes.</title>
        <authorList>
            <person name="Fukata M."/>
            <person name="Fukata Y."/>
            <person name="Adesnik H."/>
            <person name="Nicoll R.A."/>
            <person name="Bredt D.S."/>
        </authorList>
    </citation>
    <scope>NUCLEOTIDE SEQUENCE [MRNA]</scope>
    <scope>TISSUE SPECIFICITY</scope>
    <source>
        <strain>C57BL/6J</strain>
        <tissue>Brain</tissue>
    </source>
</reference>
<reference key="2">
    <citation type="journal article" date="2005" name="Science">
        <title>The transcriptional landscape of the mammalian genome.</title>
        <authorList>
            <person name="Carninci P."/>
            <person name="Kasukawa T."/>
            <person name="Katayama S."/>
            <person name="Gough J."/>
            <person name="Frith M.C."/>
            <person name="Maeda N."/>
            <person name="Oyama R."/>
            <person name="Ravasi T."/>
            <person name="Lenhard B."/>
            <person name="Wells C."/>
            <person name="Kodzius R."/>
            <person name="Shimokawa K."/>
            <person name="Bajic V.B."/>
            <person name="Brenner S.E."/>
            <person name="Batalov S."/>
            <person name="Forrest A.R."/>
            <person name="Zavolan M."/>
            <person name="Davis M.J."/>
            <person name="Wilming L.G."/>
            <person name="Aidinis V."/>
            <person name="Allen J.E."/>
            <person name="Ambesi-Impiombato A."/>
            <person name="Apweiler R."/>
            <person name="Aturaliya R.N."/>
            <person name="Bailey T.L."/>
            <person name="Bansal M."/>
            <person name="Baxter L."/>
            <person name="Beisel K.W."/>
            <person name="Bersano T."/>
            <person name="Bono H."/>
            <person name="Chalk A.M."/>
            <person name="Chiu K.P."/>
            <person name="Choudhary V."/>
            <person name="Christoffels A."/>
            <person name="Clutterbuck D.R."/>
            <person name="Crowe M.L."/>
            <person name="Dalla E."/>
            <person name="Dalrymple B.P."/>
            <person name="de Bono B."/>
            <person name="Della Gatta G."/>
            <person name="di Bernardo D."/>
            <person name="Down T."/>
            <person name="Engstrom P."/>
            <person name="Fagiolini M."/>
            <person name="Faulkner G."/>
            <person name="Fletcher C.F."/>
            <person name="Fukushima T."/>
            <person name="Furuno M."/>
            <person name="Futaki S."/>
            <person name="Gariboldi M."/>
            <person name="Georgii-Hemming P."/>
            <person name="Gingeras T.R."/>
            <person name="Gojobori T."/>
            <person name="Green R.E."/>
            <person name="Gustincich S."/>
            <person name="Harbers M."/>
            <person name="Hayashi Y."/>
            <person name="Hensch T.K."/>
            <person name="Hirokawa N."/>
            <person name="Hill D."/>
            <person name="Huminiecki L."/>
            <person name="Iacono M."/>
            <person name="Ikeo K."/>
            <person name="Iwama A."/>
            <person name="Ishikawa T."/>
            <person name="Jakt M."/>
            <person name="Kanapin A."/>
            <person name="Katoh M."/>
            <person name="Kawasawa Y."/>
            <person name="Kelso J."/>
            <person name="Kitamura H."/>
            <person name="Kitano H."/>
            <person name="Kollias G."/>
            <person name="Krishnan S.P."/>
            <person name="Kruger A."/>
            <person name="Kummerfeld S.K."/>
            <person name="Kurochkin I.V."/>
            <person name="Lareau L.F."/>
            <person name="Lazarevic D."/>
            <person name="Lipovich L."/>
            <person name="Liu J."/>
            <person name="Liuni S."/>
            <person name="McWilliam S."/>
            <person name="Madan Babu M."/>
            <person name="Madera M."/>
            <person name="Marchionni L."/>
            <person name="Matsuda H."/>
            <person name="Matsuzawa S."/>
            <person name="Miki H."/>
            <person name="Mignone F."/>
            <person name="Miyake S."/>
            <person name="Morris K."/>
            <person name="Mottagui-Tabar S."/>
            <person name="Mulder N."/>
            <person name="Nakano N."/>
            <person name="Nakauchi H."/>
            <person name="Ng P."/>
            <person name="Nilsson R."/>
            <person name="Nishiguchi S."/>
            <person name="Nishikawa S."/>
            <person name="Nori F."/>
            <person name="Ohara O."/>
            <person name="Okazaki Y."/>
            <person name="Orlando V."/>
            <person name="Pang K.C."/>
            <person name="Pavan W.J."/>
            <person name="Pavesi G."/>
            <person name="Pesole G."/>
            <person name="Petrovsky N."/>
            <person name="Piazza S."/>
            <person name="Reed J."/>
            <person name="Reid J.F."/>
            <person name="Ring B.Z."/>
            <person name="Ringwald M."/>
            <person name="Rost B."/>
            <person name="Ruan Y."/>
            <person name="Salzberg S.L."/>
            <person name="Sandelin A."/>
            <person name="Schneider C."/>
            <person name="Schoenbach C."/>
            <person name="Sekiguchi K."/>
            <person name="Semple C.A."/>
            <person name="Seno S."/>
            <person name="Sessa L."/>
            <person name="Sheng Y."/>
            <person name="Shibata Y."/>
            <person name="Shimada H."/>
            <person name="Shimada K."/>
            <person name="Silva D."/>
            <person name="Sinclair B."/>
            <person name="Sperling S."/>
            <person name="Stupka E."/>
            <person name="Sugiura K."/>
            <person name="Sultana R."/>
            <person name="Takenaka Y."/>
            <person name="Taki K."/>
            <person name="Tammoja K."/>
            <person name="Tan S.L."/>
            <person name="Tang S."/>
            <person name="Taylor M.S."/>
            <person name="Tegner J."/>
            <person name="Teichmann S.A."/>
            <person name="Ueda H.R."/>
            <person name="van Nimwegen E."/>
            <person name="Verardo R."/>
            <person name="Wei C.L."/>
            <person name="Yagi K."/>
            <person name="Yamanishi H."/>
            <person name="Zabarovsky E."/>
            <person name="Zhu S."/>
            <person name="Zimmer A."/>
            <person name="Hide W."/>
            <person name="Bult C."/>
            <person name="Grimmond S.M."/>
            <person name="Teasdale R.D."/>
            <person name="Liu E.T."/>
            <person name="Brusic V."/>
            <person name="Quackenbush J."/>
            <person name="Wahlestedt C."/>
            <person name="Mattick J.S."/>
            <person name="Hume D.A."/>
            <person name="Kai C."/>
            <person name="Sasaki D."/>
            <person name="Tomaru Y."/>
            <person name="Fukuda S."/>
            <person name="Kanamori-Katayama M."/>
            <person name="Suzuki M."/>
            <person name="Aoki J."/>
            <person name="Arakawa T."/>
            <person name="Iida J."/>
            <person name="Imamura K."/>
            <person name="Itoh M."/>
            <person name="Kato T."/>
            <person name="Kawaji H."/>
            <person name="Kawagashira N."/>
            <person name="Kawashima T."/>
            <person name="Kojima M."/>
            <person name="Kondo S."/>
            <person name="Konno H."/>
            <person name="Nakano K."/>
            <person name="Ninomiya N."/>
            <person name="Nishio T."/>
            <person name="Okada M."/>
            <person name="Plessy C."/>
            <person name="Shibata K."/>
            <person name="Shiraki T."/>
            <person name="Suzuki S."/>
            <person name="Tagami M."/>
            <person name="Waki K."/>
            <person name="Watahiki A."/>
            <person name="Okamura-Oho Y."/>
            <person name="Suzuki H."/>
            <person name="Kawai J."/>
            <person name="Hayashizaki Y."/>
        </authorList>
    </citation>
    <scope>NUCLEOTIDE SEQUENCE [LARGE SCALE MRNA]</scope>
    <source>
        <strain>C57BL/6J</strain>
        <tissue>Bone</tissue>
        <tissue>Brain</tissue>
    </source>
</reference>
<reference key="3">
    <citation type="journal article" date="2004" name="Genome Res.">
        <title>The status, quality, and expansion of the NIH full-length cDNA project: the Mammalian Gene Collection (MGC).</title>
        <authorList>
            <consortium name="The MGC Project Team"/>
        </authorList>
    </citation>
    <scope>NUCLEOTIDE SEQUENCE [LARGE SCALE MRNA]</scope>
    <source>
        <tissue>Brain</tissue>
    </source>
</reference>
<sequence length="425" mass="48150">MKPVKKKKTEEPELEPLCCCEYIDRNGEKNHVAACLCDCQDLDEGCDRWLTCQSLRPETCERITDTISDRLRIPWLRGAKKVNISIVPPLVLLPVFLHVASWHFLLGVVVLTSLPMLALWYYYLTHRRKEQTLFFLSLGLFSLGYMYYVFLREVVPQGRVGPTQLALLTCGLLLILLALYRAKKNPGYLSNDKSPSNSQIECPVKKGQEKTKGFPGTDASGSLNNRTLKDDVRGSSRVGLDSPAKVKEDWCAKCQLVRPARAWHCRICGICVRRMDHHCVWINSCVGESNHQAFILALSIFLLTSVYGISLTLNTICRDRSLFTALFYCPGVYANYSSALSFTCVWYSVIITAGMAYIFLIQLINISYNVTEREVQQALRQKTGRRLLCGLIVDTGQYNRGFLRNWLQFSTLGTHTVHTPAEDIV</sequence>